<feature type="chain" id="PRO_0000310028" description="Large ribosomal subunit protein uL2">
    <location>
        <begin position="1"/>
        <end position="277"/>
    </location>
</feature>
<feature type="region of interest" description="Disordered" evidence="2">
    <location>
        <begin position="219"/>
        <end position="277"/>
    </location>
</feature>
<accession>A4VYP6</accession>
<protein>
    <recommendedName>
        <fullName evidence="1">Large ribosomal subunit protein uL2</fullName>
    </recommendedName>
    <alternativeName>
        <fullName evidence="3">50S ribosomal protein L2</fullName>
    </alternativeName>
</protein>
<proteinExistence type="inferred from homology"/>
<keyword id="KW-0687">Ribonucleoprotein</keyword>
<keyword id="KW-0689">Ribosomal protein</keyword>
<keyword id="KW-0694">RNA-binding</keyword>
<keyword id="KW-0699">rRNA-binding</keyword>
<sequence length="277" mass="29862">MGIKVYKPTTNGRRNMTSLDFAEITTSTPEKSLLVALKSKAGRNNNGRITVRHQGGGHKRFYRLVDFKRNKDGVEAIVKTIEYDPNRSANIALVHYTDGVKAYIIAPKGLEVGQRIVSGPEADIKVGNALPLANIPVGTVVHNIELKPGRGGELVRAAGASAQVLGQEGKYVLVRLQSGEVRMILGTCRATVGTVGNEQHGLVNLGKAGRSRWKGIRPTVRGSVMNPNDHPHGGGEGKAPVGRKAPSTPWGKPALGLKTRNKKAKSDKLIVRRRNQK</sequence>
<gene>
    <name evidence="1" type="primary">rplB</name>
    <name type="ordered locus">SSU98_0075</name>
</gene>
<organism>
    <name type="scientific">Streptococcus suis (strain 98HAH33)</name>
    <dbReference type="NCBI Taxonomy" id="391296"/>
    <lineage>
        <taxon>Bacteria</taxon>
        <taxon>Bacillati</taxon>
        <taxon>Bacillota</taxon>
        <taxon>Bacilli</taxon>
        <taxon>Lactobacillales</taxon>
        <taxon>Streptococcaceae</taxon>
        <taxon>Streptococcus</taxon>
    </lineage>
</organism>
<name>RL2_STRS2</name>
<comment type="function">
    <text evidence="1">One of the primary rRNA binding proteins. Required for association of the 30S and 50S subunits to form the 70S ribosome, for tRNA binding and peptide bond formation. It has been suggested to have peptidyltransferase activity; this is somewhat controversial. Makes several contacts with the 16S rRNA in the 70S ribosome.</text>
</comment>
<comment type="subunit">
    <text evidence="1">Part of the 50S ribosomal subunit. Forms a bridge to the 30S subunit in the 70S ribosome.</text>
</comment>
<comment type="similarity">
    <text evidence="1">Belongs to the universal ribosomal protein uL2 family.</text>
</comment>
<reference key="1">
    <citation type="journal article" date="2007" name="PLoS ONE">
        <title>A glimpse of streptococcal toxic shock syndrome from comparative genomics of S. suis 2 Chinese isolates.</title>
        <authorList>
            <person name="Chen C."/>
            <person name="Tang J."/>
            <person name="Dong W."/>
            <person name="Wang C."/>
            <person name="Feng Y."/>
            <person name="Wang J."/>
            <person name="Zheng F."/>
            <person name="Pan X."/>
            <person name="Liu D."/>
            <person name="Li M."/>
            <person name="Song Y."/>
            <person name="Zhu X."/>
            <person name="Sun H."/>
            <person name="Feng T."/>
            <person name="Guo Z."/>
            <person name="Ju A."/>
            <person name="Ge J."/>
            <person name="Dong Y."/>
            <person name="Sun W."/>
            <person name="Jiang Y."/>
            <person name="Wang J."/>
            <person name="Yan J."/>
            <person name="Yang H."/>
            <person name="Wang X."/>
            <person name="Gao G.F."/>
            <person name="Yang R."/>
            <person name="Wang J."/>
            <person name="Yu J."/>
        </authorList>
    </citation>
    <scope>NUCLEOTIDE SEQUENCE [LARGE SCALE GENOMIC DNA]</scope>
    <source>
        <strain>98HAH33</strain>
    </source>
</reference>
<evidence type="ECO:0000255" key="1">
    <source>
        <dbReference type="HAMAP-Rule" id="MF_01320"/>
    </source>
</evidence>
<evidence type="ECO:0000256" key="2">
    <source>
        <dbReference type="SAM" id="MobiDB-lite"/>
    </source>
</evidence>
<evidence type="ECO:0000305" key="3"/>
<dbReference type="EMBL" id="CP000408">
    <property type="protein sequence ID" value="ABP91235.1"/>
    <property type="molecule type" value="Genomic_DNA"/>
</dbReference>
<dbReference type="SMR" id="A4VYP6"/>
<dbReference type="KEGG" id="ssv:SSU98_0075"/>
<dbReference type="HOGENOM" id="CLU_036235_2_1_9"/>
<dbReference type="GO" id="GO:0015934">
    <property type="term" value="C:large ribosomal subunit"/>
    <property type="evidence" value="ECO:0007669"/>
    <property type="project" value="InterPro"/>
</dbReference>
<dbReference type="GO" id="GO:0019843">
    <property type="term" value="F:rRNA binding"/>
    <property type="evidence" value="ECO:0007669"/>
    <property type="project" value="UniProtKB-UniRule"/>
</dbReference>
<dbReference type="GO" id="GO:0003735">
    <property type="term" value="F:structural constituent of ribosome"/>
    <property type="evidence" value="ECO:0007669"/>
    <property type="project" value="InterPro"/>
</dbReference>
<dbReference type="GO" id="GO:0016740">
    <property type="term" value="F:transferase activity"/>
    <property type="evidence" value="ECO:0007669"/>
    <property type="project" value="InterPro"/>
</dbReference>
<dbReference type="GO" id="GO:0002181">
    <property type="term" value="P:cytoplasmic translation"/>
    <property type="evidence" value="ECO:0007669"/>
    <property type="project" value="TreeGrafter"/>
</dbReference>
<dbReference type="FunFam" id="2.30.30.30:FF:000001">
    <property type="entry name" value="50S ribosomal protein L2"/>
    <property type="match status" value="1"/>
</dbReference>
<dbReference type="FunFam" id="2.40.50.140:FF:000003">
    <property type="entry name" value="50S ribosomal protein L2"/>
    <property type="match status" value="1"/>
</dbReference>
<dbReference type="FunFam" id="4.10.950.10:FF:000001">
    <property type="entry name" value="50S ribosomal protein L2"/>
    <property type="match status" value="1"/>
</dbReference>
<dbReference type="Gene3D" id="2.30.30.30">
    <property type="match status" value="1"/>
</dbReference>
<dbReference type="Gene3D" id="2.40.50.140">
    <property type="entry name" value="Nucleic acid-binding proteins"/>
    <property type="match status" value="1"/>
</dbReference>
<dbReference type="Gene3D" id="4.10.950.10">
    <property type="entry name" value="Ribosomal protein L2, domain 3"/>
    <property type="match status" value="1"/>
</dbReference>
<dbReference type="HAMAP" id="MF_01320_B">
    <property type="entry name" value="Ribosomal_uL2_B"/>
    <property type="match status" value="1"/>
</dbReference>
<dbReference type="InterPro" id="IPR012340">
    <property type="entry name" value="NA-bd_OB-fold"/>
</dbReference>
<dbReference type="InterPro" id="IPR014722">
    <property type="entry name" value="Rib_uL2_dom2"/>
</dbReference>
<dbReference type="InterPro" id="IPR002171">
    <property type="entry name" value="Ribosomal_uL2"/>
</dbReference>
<dbReference type="InterPro" id="IPR005880">
    <property type="entry name" value="Ribosomal_uL2_bac/org-type"/>
</dbReference>
<dbReference type="InterPro" id="IPR022669">
    <property type="entry name" value="Ribosomal_uL2_C"/>
</dbReference>
<dbReference type="InterPro" id="IPR022671">
    <property type="entry name" value="Ribosomal_uL2_CS"/>
</dbReference>
<dbReference type="InterPro" id="IPR014726">
    <property type="entry name" value="Ribosomal_uL2_dom3"/>
</dbReference>
<dbReference type="InterPro" id="IPR022666">
    <property type="entry name" value="Ribosomal_uL2_RNA-bd_dom"/>
</dbReference>
<dbReference type="InterPro" id="IPR008991">
    <property type="entry name" value="Translation_prot_SH3-like_sf"/>
</dbReference>
<dbReference type="NCBIfam" id="TIGR01171">
    <property type="entry name" value="rplB_bact"/>
    <property type="match status" value="1"/>
</dbReference>
<dbReference type="PANTHER" id="PTHR13691:SF5">
    <property type="entry name" value="LARGE RIBOSOMAL SUBUNIT PROTEIN UL2M"/>
    <property type="match status" value="1"/>
</dbReference>
<dbReference type="PANTHER" id="PTHR13691">
    <property type="entry name" value="RIBOSOMAL PROTEIN L2"/>
    <property type="match status" value="1"/>
</dbReference>
<dbReference type="Pfam" id="PF00181">
    <property type="entry name" value="Ribosomal_L2"/>
    <property type="match status" value="1"/>
</dbReference>
<dbReference type="Pfam" id="PF03947">
    <property type="entry name" value="Ribosomal_L2_C"/>
    <property type="match status" value="1"/>
</dbReference>
<dbReference type="PIRSF" id="PIRSF002158">
    <property type="entry name" value="Ribosomal_L2"/>
    <property type="match status" value="1"/>
</dbReference>
<dbReference type="SMART" id="SM01383">
    <property type="entry name" value="Ribosomal_L2"/>
    <property type="match status" value="1"/>
</dbReference>
<dbReference type="SMART" id="SM01382">
    <property type="entry name" value="Ribosomal_L2_C"/>
    <property type="match status" value="1"/>
</dbReference>
<dbReference type="SUPFAM" id="SSF50249">
    <property type="entry name" value="Nucleic acid-binding proteins"/>
    <property type="match status" value="1"/>
</dbReference>
<dbReference type="SUPFAM" id="SSF50104">
    <property type="entry name" value="Translation proteins SH3-like domain"/>
    <property type="match status" value="1"/>
</dbReference>
<dbReference type="PROSITE" id="PS00467">
    <property type="entry name" value="RIBOSOMAL_L2"/>
    <property type="match status" value="1"/>
</dbReference>